<accession>B2I7H2</accession>
<proteinExistence type="inferred from homology"/>
<keyword id="KW-0963">Cytoplasm</keyword>
<keyword id="KW-0233">DNA recombination</keyword>
<comment type="function">
    <text evidence="1">May be involved in recombination.</text>
</comment>
<comment type="subcellular location">
    <subcellularLocation>
        <location evidence="1">Cytoplasm</location>
        <location evidence="1">Nucleoid</location>
    </subcellularLocation>
</comment>
<comment type="similarity">
    <text evidence="1">Belongs to the RdgC family.</text>
</comment>
<gene>
    <name evidence="1" type="primary">rdgC</name>
    <name type="ordered locus">XfasM23_1662</name>
</gene>
<protein>
    <recommendedName>
        <fullName evidence="1">Recombination-associated protein RdgC</fullName>
    </recommendedName>
</protein>
<organism>
    <name type="scientific">Xylella fastidiosa (strain M23)</name>
    <dbReference type="NCBI Taxonomy" id="405441"/>
    <lineage>
        <taxon>Bacteria</taxon>
        <taxon>Pseudomonadati</taxon>
        <taxon>Pseudomonadota</taxon>
        <taxon>Gammaproteobacteria</taxon>
        <taxon>Lysobacterales</taxon>
        <taxon>Lysobacteraceae</taxon>
        <taxon>Xylella</taxon>
    </lineage>
</organism>
<reference key="1">
    <citation type="journal article" date="2010" name="J. Bacteriol.">
        <title>Whole genome sequences of two Xylella fastidiosa strains (M12 and M23) causing almond leaf scorch disease in California.</title>
        <authorList>
            <person name="Chen J."/>
            <person name="Xie G."/>
            <person name="Han S."/>
            <person name="Chertkov O."/>
            <person name="Sims D."/>
            <person name="Civerolo E.L."/>
        </authorList>
    </citation>
    <scope>NUCLEOTIDE SEQUENCE [LARGE SCALE GENOMIC DNA]</scope>
    <source>
        <strain>M23</strain>
    </source>
</reference>
<name>RDGC_XYLF2</name>
<sequence length="302" mass="34056">MFFRNLTLFRFPTSLDFSQIDSILPNARLRPVGPLEMTSRGFISPFGREEQEVLNQRQGDFLWLTVGSEDKILPASVVNDLLTRKCSEIEEKKGHPPGGRERKRIKDDLIHELLPRAFVKNSRIDAMLDLRYGYVAVDTASRKAAETVISEIRDLLGSFPALPLNAEISIRSMLTSWIAGEPLPEHLNLGDECEMKDATEGGAIIKCQHQALRCEEIDKHLEVGKQVSKLALILDDHVSFVLGDDLVIRKLKFLDGMLDQLEHSDTDGIRAELDARFALMSAEIRRLFLLLEVPLKLSKANN</sequence>
<feature type="chain" id="PRO_1000099078" description="Recombination-associated protein RdgC">
    <location>
        <begin position="1"/>
        <end position="302"/>
    </location>
</feature>
<dbReference type="EMBL" id="CP001011">
    <property type="protein sequence ID" value="ACB93069.1"/>
    <property type="molecule type" value="Genomic_DNA"/>
</dbReference>
<dbReference type="RefSeq" id="WP_004088756.1">
    <property type="nucleotide sequence ID" value="NC_010577.1"/>
</dbReference>
<dbReference type="SMR" id="B2I7H2"/>
<dbReference type="KEGG" id="xfn:XfasM23_1662"/>
<dbReference type="HOGENOM" id="CLU_052038_1_1_6"/>
<dbReference type="Proteomes" id="UP000001698">
    <property type="component" value="Chromosome"/>
</dbReference>
<dbReference type="GO" id="GO:0043590">
    <property type="term" value="C:bacterial nucleoid"/>
    <property type="evidence" value="ECO:0007669"/>
    <property type="project" value="TreeGrafter"/>
</dbReference>
<dbReference type="GO" id="GO:0005737">
    <property type="term" value="C:cytoplasm"/>
    <property type="evidence" value="ECO:0007669"/>
    <property type="project" value="UniProtKB-UniRule"/>
</dbReference>
<dbReference type="GO" id="GO:0003690">
    <property type="term" value="F:double-stranded DNA binding"/>
    <property type="evidence" value="ECO:0007669"/>
    <property type="project" value="TreeGrafter"/>
</dbReference>
<dbReference type="GO" id="GO:0006310">
    <property type="term" value="P:DNA recombination"/>
    <property type="evidence" value="ECO:0007669"/>
    <property type="project" value="UniProtKB-UniRule"/>
</dbReference>
<dbReference type="GO" id="GO:0000018">
    <property type="term" value="P:regulation of DNA recombination"/>
    <property type="evidence" value="ECO:0007669"/>
    <property type="project" value="TreeGrafter"/>
</dbReference>
<dbReference type="HAMAP" id="MF_00194">
    <property type="entry name" value="RdgC"/>
    <property type="match status" value="1"/>
</dbReference>
<dbReference type="InterPro" id="IPR007476">
    <property type="entry name" value="RdgC"/>
</dbReference>
<dbReference type="NCBIfam" id="NF001464">
    <property type="entry name" value="PRK00321.1-5"/>
    <property type="match status" value="1"/>
</dbReference>
<dbReference type="NCBIfam" id="NF001465">
    <property type="entry name" value="PRK00321.1-6"/>
    <property type="match status" value="1"/>
</dbReference>
<dbReference type="PANTHER" id="PTHR38103">
    <property type="entry name" value="RECOMBINATION-ASSOCIATED PROTEIN RDGC"/>
    <property type="match status" value="1"/>
</dbReference>
<dbReference type="PANTHER" id="PTHR38103:SF1">
    <property type="entry name" value="RECOMBINATION-ASSOCIATED PROTEIN RDGC"/>
    <property type="match status" value="1"/>
</dbReference>
<dbReference type="Pfam" id="PF04381">
    <property type="entry name" value="RdgC"/>
    <property type="match status" value="1"/>
</dbReference>
<evidence type="ECO:0000255" key="1">
    <source>
        <dbReference type="HAMAP-Rule" id="MF_00194"/>
    </source>
</evidence>